<gene>
    <name type="primary">Golt1b</name>
</gene>
<comment type="function">
    <text evidence="1">May be involved in fusion of ER-derived transport vesicles with the Golgi complex.</text>
</comment>
<comment type="subcellular location">
    <subcellularLocation>
        <location evidence="1">Golgi apparatus membrane</location>
        <topology evidence="1">Multi-pass membrane protein</topology>
    </subcellularLocation>
</comment>
<comment type="similarity">
    <text evidence="4">Belongs to the GOT1 family.</text>
</comment>
<comment type="sequence caution" evidence="4">
    <conflict type="erroneous initiation">
        <sequence resource="EMBL-CDS" id="BAB31257"/>
    </conflict>
</comment>
<keyword id="KW-0007">Acetylation</keyword>
<keyword id="KW-0333">Golgi apparatus</keyword>
<keyword id="KW-0472">Membrane</keyword>
<keyword id="KW-0653">Protein transport</keyword>
<keyword id="KW-1185">Reference proteome</keyword>
<keyword id="KW-0812">Transmembrane</keyword>
<keyword id="KW-1133">Transmembrane helix</keyword>
<keyword id="KW-0813">Transport</keyword>
<feature type="chain" id="PRO_0000218583" description="Vesicle transport protein GOT1B">
    <location>
        <begin position="1"/>
        <end position="138"/>
    </location>
</feature>
<feature type="topological domain" description="Cytoplasmic" evidence="3">
    <location>
        <begin position="1"/>
        <end position="9"/>
    </location>
</feature>
<feature type="transmembrane region" description="Helical; Name=1" evidence="3">
    <location>
        <begin position="10"/>
        <end position="30"/>
    </location>
</feature>
<feature type="topological domain" description="Lumenal" evidence="3">
    <location>
        <begin position="31"/>
        <end position="32"/>
    </location>
</feature>
<feature type="transmembrane region" description="Helical; Name=2" evidence="3">
    <location>
        <begin position="33"/>
        <end position="53"/>
    </location>
</feature>
<feature type="topological domain" description="Cytoplasmic" evidence="3">
    <location>
        <begin position="54"/>
        <end position="68"/>
    </location>
</feature>
<feature type="topological domain" description="Lumenal" evidence="3">
    <location>
        <position position="90"/>
    </location>
</feature>
<feature type="transmembrane region" description="Helical; Name=4" evidence="3">
    <location>
        <begin position="91"/>
        <end position="109"/>
    </location>
</feature>
<feature type="topological domain" description="Cytoplasmic" evidence="3">
    <location>
        <begin position="110"/>
        <end position="138"/>
    </location>
</feature>
<feature type="modified residue" description="N-acetylmethionine" evidence="2">
    <location>
        <position position="1"/>
    </location>
</feature>
<reference key="1">
    <citation type="journal article" date="2005" name="Science">
        <title>The transcriptional landscape of the mammalian genome.</title>
        <authorList>
            <person name="Carninci P."/>
            <person name="Kasukawa T."/>
            <person name="Katayama S."/>
            <person name="Gough J."/>
            <person name="Frith M.C."/>
            <person name="Maeda N."/>
            <person name="Oyama R."/>
            <person name="Ravasi T."/>
            <person name="Lenhard B."/>
            <person name="Wells C."/>
            <person name="Kodzius R."/>
            <person name="Shimokawa K."/>
            <person name="Bajic V.B."/>
            <person name="Brenner S.E."/>
            <person name="Batalov S."/>
            <person name="Forrest A.R."/>
            <person name="Zavolan M."/>
            <person name="Davis M.J."/>
            <person name="Wilming L.G."/>
            <person name="Aidinis V."/>
            <person name="Allen J.E."/>
            <person name="Ambesi-Impiombato A."/>
            <person name="Apweiler R."/>
            <person name="Aturaliya R.N."/>
            <person name="Bailey T.L."/>
            <person name="Bansal M."/>
            <person name="Baxter L."/>
            <person name="Beisel K.W."/>
            <person name="Bersano T."/>
            <person name="Bono H."/>
            <person name="Chalk A.M."/>
            <person name="Chiu K.P."/>
            <person name="Choudhary V."/>
            <person name="Christoffels A."/>
            <person name="Clutterbuck D.R."/>
            <person name="Crowe M.L."/>
            <person name="Dalla E."/>
            <person name="Dalrymple B.P."/>
            <person name="de Bono B."/>
            <person name="Della Gatta G."/>
            <person name="di Bernardo D."/>
            <person name="Down T."/>
            <person name="Engstrom P."/>
            <person name="Fagiolini M."/>
            <person name="Faulkner G."/>
            <person name="Fletcher C.F."/>
            <person name="Fukushima T."/>
            <person name="Furuno M."/>
            <person name="Futaki S."/>
            <person name="Gariboldi M."/>
            <person name="Georgii-Hemming P."/>
            <person name="Gingeras T.R."/>
            <person name="Gojobori T."/>
            <person name="Green R.E."/>
            <person name="Gustincich S."/>
            <person name="Harbers M."/>
            <person name="Hayashi Y."/>
            <person name="Hensch T.K."/>
            <person name="Hirokawa N."/>
            <person name="Hill D."/>
            <person name="Huminiecki L."/>
            <person name="Iacono M."/>
            <person name="Ikeo K."/>
            <person name="Iwama A."/>
            <person name="Ishikawa T."/>
            <person name="Jakt M."/>
            <person name="Kanapin A."/>
            <person name="Katoh M."/>
            <person name="Kawasawa Y."/>
            <person name="Kelso J."/>
            <person name="Kitamura H."/>
            <person name="Kitano H."/>
            <person name="Kollias G."/>
            <person name="Krishnan S.P."/>
            <person name="Kruger A."/>
            <person name="Kummerfeld S.K."/>
            <person name="Kurochkin I.V."/>
            <person name="Lareau L.F."/>
            <person name="Lazarevic D."/>
            <person name="Lipovich L."/>
            <person name="Liu J."/>
            <person name="Liuni S."/>
            <person name="McWilliam S."/>
            <person name="Madan Babu M."/>
            <person name="Madera M."/>
            <person name="Marchionni L."/>
            <person name="Matsuda H."/>
            <person name="Matsuzawa S."/>
            <person name="Miki H."/>
            <person name="Mignone F."/>
            <person name="Miyake S."/>
            <person name="Morris K."/>
            <person name="Mottagui-Tabar S."/>
            <person name="Mulder N."/>
            <person name="Nakano N."/>
            <person name="Nakauchi H."/>
            <person name="Ng P."/>
            <person name="Nilsson R."/>
            <person name="Nishiguchi S."/>
            <person name="Nishikawa S."/>
            <person name="Nori F."/>
            <person name="Ohara O."/>
            <person name="Okazaki Y."/>
            <person name="Orlando V."/>
            <person name="Pang K.C."/>
            <person name="Pavan W.J."/>
            <person name="Pavesi G."/>
            <person name="Pesole G."/>
            <person name="Petrovsky N."/>
            <person name="Piazza S."/>
            <person name="Reed J."/>
            <person name="Reid J.F."/>
            <person name="Ring B.Z."/>
            <person name="Ringwald M."/>
            <person name="Rost B."/>
            <person name="Ruan Y."/>
            <person name="Salzberg S.L."/>
            <person name="Sandelin A."/>
            <person name="Schneider C."/>
            <person name="Schoenbach C."/>
            <person name="Sekiguchi K."/>
            <person name="Semple C.A."/>
            <person name="Seno S."/>
            <person name="Sessa L."/>
            <person name="Sheng Y."/>
            <person name="Shibata Y."/>
            <person name="Shimada H."/>
            <person name="Shimada K."/>
            <person name="Silva D."/>
            <person name="Sinclair B."/>
            <person name="Sperling S."/>
            <person name="Stupka E."/>
            <person name="Sugiura K."/>
            <person name="Sultana R."/>
            <person name="Takenaka Y."/>
            <person name="Taki K."/>
            <person name="Tammoja K."/>
            <person name="Tan S.L."/>
            <person name="Tang S."/>
            <person name="Taylor M.S."/>
            <person name="Tegner J."/>
            <person name="Teichmann S.A."/>
            <person name="Ueda H.R."/>
            <person name="van Nimwegen E."/>
            <person name="Verardo R."/>
            <person name="Wei C.L."/>
            <person name="Yagi K."/>
            <person name="Yamanishi H."/>
            <person name="Zabarovsky E."/>
            <person name="Zhu S."/>
            <person name="Zimmer A."/>
            <person name="Hide W."/>
            <person name="Bult C."/>
            <person name="Grimmond S.M."/>
            <person name="Teasdale R.D."/>
            <person name="Liu E.T."/>
            <person name="Brusic V."/>
            <person name="Quackenbush J."/>
            <person name="Wahlestedt C."/>
            <person name="Mattick J.S."/>
            <person name="Hume D.A."/>
            <person name="Kai C."/>
            <person name="Sasaki D."/>
            <person name="Tomaru Y."/>
            <person name="Fukuda S."/>
            <person name="Kanamori-Katayama M."/>
            <person name="Suzuki M."/>
            <person name="Aoki J."/>
            <person name="Arakawa T."/>
            <person name="Iida J."/>
            <person name="Imamura K."/>
            <person name="Itoh M."/>
            <person name="Kato T."/>
            <person name="Kawaji H."/>
            <person name="Kawagashira N."/>
            <person name="Kawashima T."/>
            <person name="Kojima M."/>
            <person name="Kondo S."/>
            <person name="Konno H."/>
            <person name="Nakano K."/>
            <person name="Ninomiya N."/>
            <person name="Nishio T."/>
            <person name="Okada M."/>
            <person name="Plessy C."/>
            <person name="Shibata K."/>
            <person name="Shiraki T."/>
            <person name="Suzuki S."/>
            <person name="Tagami M."/>
            <person name="Waki K."/>
            <person name="Watahiki A."/>
            <person name="Okamura-Oho Y."/>
            <person name="Suzuki H."/>
            <person name="Kawai J."/>
            <person name="Hayashizaki Y."/>
        </authorList>
    </citation>
    <scope>NUCLEOTIDE SEQUENCE [LARGE SCALE MRNA]</scope>
    <source>
        <strain>C57BL/6J</strain>
        <tissue>Colon</tissue>
        <tissue>Tongue</tissue>
    </source>
</reference>
<reference key="2">
    <citation type="journal article" date="2004" name="Genome Res.">
        <title>The status, quality, and expansion of the NIH full-length cDNA project: the Mammalian Gene Collection (MGC).</title>
        <authorList>
            <consortium name="The MGC Project Team"/>
        </authorList>
    </citation>
    <scope>NUCLEOTIDE SEQUENCE [LARGE SCALE MRNA]</scope>
    <source>
        <strain>C57BL/6J</strain>
        <tissue>Embryonic germ cell</tissue>
    </source>
</reference>
<reference key="3">
    <citation type="journal article" date="2010" name="Cell">
        <title>A tissue-specific atlas of mouse protein phosphorylation and expression.</title>
        <authorList>
            <person name="Huttlin E.L."/>
            <person name="Jedrychowski M.P."/>
            <person name="Elias J.E."/>
            <person name="Goswami T."/>
            <person name="Rad R."/>
            <person name="Beausoleil S.A."/>
            <person name="Villen J."/>
            <person name="Haas W."/>
            <person name="Sowa M.E."/>
            <person name="Gygi S.P."/>
        </authorList>
    </citation>
    <scope>IDENTIFICATION BY MASS SPECTROMETRY [LARGE SCALE ANALYSIS]</scope>
    <source>
        <tissue>Brain</tissue>
        <tissue>Brown adipose tissue</tissue>
        <tissue>Pancreas</tissue>
        <tissue>Spleen</tissue>
        <tissue>Testis</tissue>
    </source>
</reference>
<sequence>MISLTDTQKIGMGLTGFGVFFLFFGMILFFDKALLAIGNVLFVAGLAFVIGLERTFRFFFQRHKVKATGFFLGGVFVVLIGWPLIGMIFEIYGFFLLFRGFFPVVVGFIRRVPVLGSLLNLPGIRSFVDKVGESNNMV</sequence>
<proteinExistence type="evidence at protein level"/>
<accession>Q9CR60</accession>
<dbReference type="EMBL" id="AK009991">
    <property type="protein sequence ID" value="BAB26630.1"/>
    <property type="molecule type" value="mRNA"/>
</dbReference>
<dbReference type="EMBL" id="AK018531">
    <property type="protein sequence ID" value="BAB31257.2"/>
    <property type="status" value="ALT_INIT"/>
    <property type="molecule type" value="mRNA"/>
</dbReference>
<dbReference type="EMBL" id="BC085246">
    <property type="protein sequence ID" value="AAH85246.1"/>
    <property type="molecule type" value="mRNA"/>
</dbReference>
<dbReference type="CCDS" id="CCDS20682.1"/>
<dbReference type="RefSeq" id="NP_080148.1">
    <property type="nucleotide sequence ID" value="NM_025872.5"/>
</dbReference>
<dbReference type="BioGRID" id="211840">
    <property type="interactions" value="3"/>
</dbReference>
<dbReference type="FunCoup" id="Q9CR60">
    <property type="interactions" value="2546"/>
</dbReference>
<dbReference type="STRING" id="10090.ENSMUSP00000032372"/>
<dbReference type="iPTMnet" id="Q9CR60"/>
<dbReference type="PhosphoSitePlus" id="Q9CR60"/>
<dbReference type="SwissPalm" id="Q9CR60"/>
<dbReference type="PaxDb" id="10090-ENSMUSP00000032372"/>
<dbReference type="PeptideAtlas" id="Q9CR60"/>
<dbReference type="ProteomicsDB" id="271255"/>
<dbReference type="Pumba" id="Q9CR60"/>
<dbReference type="Antibodypedia" id="67178">
    <property type="antibodies" value="59 antibodies from 16 providers"/>
</dbReference>
<dbReference type="DNASU" id="66964"/>
<dbReference type="Ensembl" id="ENSMUST00000032372.7">
    <property type="protein sequence ID" value="ENSMUSP00000032372.7"/>
    <property type="gene ID" value="ENSMUSG00000030245.11"/>
</dbReference>
<dbReference type="GeneID" id="66964"/>
<dbReference type="KEGG" id="mmu:66964"/>
<dbReference type="UCSC" id="uc009epg.1">
    <property type="organism name" value="mouse"/>
</dbReference>
<dbReference type="AGR" id="MGI:1914214"/>
<dbReference type="CTD" id="51026"/>
<dbReference type="MGI" id="MGI:1914214">
    <property type="gene designation" value="Golt1b"/>
</dbReference>
<dbReference type="VEuPathDB" id="HostDB:ENSMUSG00000030245"/>
<dbReference type="eggNOG" id="KOG1743">
    <property type="taxonomic scope" value="Eukaryota"/>
</dbReference>
<dbReference type="GeneTree" id="ENSGT00390000014507"/>
<dbReference type="HOGENOM" id="CLU_124519_1_0_1"/>
<dbReference type="InParanoid" id="Q9CR60"/>
<dbReference type="OMA" id="MWLTDAQ"/>
<dbReference type="OrthoDB" id="204784at2759"/>
<dbReference type="PhylomeDB" id="Q9CR60"/>
<dbReference type="TreeFam" id="TF300267"/>
<dbReference type="BioGRID-ORCS" id="66964">
    <property type="hits" value="18 hits in 76 CRISPR screens"/>
</dbReference>
<dbReference type="ChiTaRS" id="Golt1b">
    <property type="organism name" value="mouse"/>
</dbReference>
<dbReference type="PRO" id="PR:Q9CR60"/>
<dbReference type="Proteomes" id="UP000000589">
    <property type="component" value="Chromosome 6"/>
</dbReference>
<dbReference type="RNAct" id="Q9CR60">
    <property type="molecule type" value="protein"/>
</dbReference>
<dbReference type="Bgee" id="ENSMUSG00000030245">
    <property type="expression patterns" value="Expressed in undifferentiated genital tubercle and 251 other cell types or tissues"/>
</dbReference>
<dbReference type="GO" id="GO:0005829">
    <property type="term" value="C:cytosol"/>
    <property type="evidence" value="ECO:0007669"/>
    <property type="project" value="GOC"/>
</dbReference>
<dbReference type="GO" id="GO:0005783">
    <property type="term" value="C:endoplasmic reticulum"/>
    <property type="evidence" value="ECO:0007669"/>
    <property type="project" value="Ensembl"/>
</dbReference>
<dbReference type="GO" id="GO:0000139">
    <property type="term" value="C:Golgi membrane"/>
    <property type="evidence" value="ECO:0007669"/>
    <property type="project" value="UniProtKB-SubCell"/>
</dbReference>
<dbReference type="GO" id="GO:0032991">
    <property type="term" value="C:protein-containing complex"/>
    <property type="evidence" value="ECO:0000266"/>
    <property type="project" value="MGI"/>
</dbReference>
<dbReference type="GO" id="GO:0006888">
    <property type="term" value="P:endoplasmic reticulum to Golgi vesicle-mediated transport"/>
    <property type="evidence" value="ECO:0007669"/>
    <property type="project" value="InterPro"/>
</dbReference>
<dbReference type="GO" id="GO:0015031">
    <property type="term" value="P:protein transport"/>
    <property type="evidence" value="ECO:0007669"/>
    <property type="project" value="UniProtKB-KW"/>
</dbReference>
<dbReference type="GO" id="GO:0042147">
    <property type="term" value="P:retrograde transport, endosome to Golgi"/>
    <property type="evidence" value="ECO:0007669"/>
    <property type="project" value="InterPro"/>
</dbReference>
<dbReference type="InterPro" id="IPR045176">
    <property type="entry name" value="Got1"/>
</dbReference>
<dbReference type="InterPro" id="IPR007305">
    <property type="entry name" value="Vesicle_transpt_Got1/SFT2"/>
</dbReference>
<dbReference type="PANTHER" id="PTHR21493">
    <property type="entry name" value="CGI-141-RELATED/LIPASE CONTAINING PROTEIN"/>
    <property type="match status" value="1"/>
</dbReference>
<dbReference type="PANTHER" id="PTHR21493:SF79">
    <property type="entry name" value="VESICLE TRANSPORT PROTEIN GOT1B"/>
    <property type="match status" value="1"/>
</dbReference>
<dbReference type="Pfam" id="PF04178">
    <property type="entry name" value="Got1"/>
    <property type="match status" value="1"/>
</dbReference>
<name>GOT1B_MOUSE</name>
<protein>
    <recommendedName>
        <fullName>Vesicle transport protein GOT1B</fullName>
    </recommendedName>
    <alternativeName>
        <fullName>Golgi transport 1 homolog B</fullName>
    </alternativeName>
</protein>
<evidence type="ECO:0000250" key="1"/>
<evidence type="ECO:0000250" key="2">
    <source>
        <dbReference type="UniProtKB" id="Q9Y3E0"/>
    </source>
</evidence>
<evidence type="ECO:0000255" key="3"/>
<evidence type="ECO:0000305" key="4"/>
<organism>
    <name type="scientific">Mus musculus</name>
    <name type="common">Mouse</name>
    <dbReference type="NCBI Taxonomy" id="10090"/>
    <lineage>
        <taxon>Eukaryota</taxon>
        <taxon>Metazoa</taxon>
        <taxon>Chordata</taxon>
        <taxon>Craniata</taxon>
        <taxon>Vertebrata</taxon>
        <taxon>Euteleostomi</taxon>
        <taxon>Mammalia</taxon>
        <taxon>Eutheria</taxon>
        <taxon>Euarchontoglires</taxon>
        <taxon>Glires</taxon>
        <taxon>Rodentia</taxon>
        <taxon>Myomorpha</taxon>
        <taxon>Muroidea</taxon>
        <taxon>Muridae</taxon>
        <taxon>Murinae</taxon>
        <taxon>Mus</taxon>
        <taxon>Mus</taxon>
    </lineage>
</organism>